<name>YQF6_CAEEL</name>
<reference key="1">
    <citation type="journal article" date="1998" name="Science">
        <title>Genome sequence of the nematode C. elegans: a platform for investigating biology.</title>
        <authorList>
            <consortium name="The C. elegans sequencing consortium"/>
        </authorList>
    </citation>
    <scope>NUCLEOTIDE SEQUENCE [LARGE SCALE GENOMIC DNA]</scope>
    <source>
        <strain>Bristol N2</strain>
    </source>
</reference>
<dbReference type="EMBL" id="Z46996">
    <property type="protein sequence ID" value="CAA87097.2"/>
    <property type="molecule type" value="Genomic_DNA"/>
</dbReference>
<dbReference type="PIR" id="T19698">
    <property type="entry name" value="T19698"/>
</dbReference>
<dbReference type="RefSeq" id="NP_497717.2">
    <property type="nucleotide sequence ID" value="NM_065316.6"/>
</dbReference>
<dbReference type="SMR" id="Q09270"/>
<dbReference type="BioGRID" id="40693">
    <property type="interactions" value="2"/>
</dbReference>
<dbReference type="FunCoup" id="Q09270">
    <property type="interactions" value="345"/>
</dbReference>
<dbReference type="STRING" id="6239.C34C12.6.1"/>
<dbReference type="PaxDb" id="6239-C34C12.6"/>
<dbReference type="PeptideAtlas" id="Q09270"/>
<dbReference type="EnsemblMetazoa" id="C34C12.6.1">
    <property type="protein sequence ID" value="C34C12.6.1"/>
    <property type="gene ID" value="WBGene00007925"/>
</dbReference>
<dbReference type="GeneID" id="175452"/>
<dbReference type="KEGG" id="cel:CELE_C34C12.6"/>
<dbReference type="UCSC" id="C34C12.6">
    <property type="organism name" value="c. elegans"/>
</dbReference>
<dbReference type="AGR" id="WB:WBGene00007925"/>
<dbReference type="CTD" id="175452"/>
<dbReference type="WormBase" id="C34C12.6">
    <property type="protein sequence ID" value="CE40606"/>
    <property type="gene ID" value="WBGene00007925"/>
</dbReference>
<dbReference type="eggNOG" id="KOG1471">
    <property type="taxonomic scope" value="Eukaryota"/>
</dbReference>
<dbReference type="GeneTree" id="ENSGT00530000066638"/>
<dbReference type="HOGENOM" id="CLU_057915_0_0_1"/>
<dbReference type="InParanoid" id="Q09270"/>
<dbReference type="OMA" id="FLFVERA"/>
<dbReference type="OrthoDB" id="1434354at2759"/>
<dbReference type="PhylomeDB" id="Q09270"/>
<dbReference type="PRO" id="PR:Q09270"/>
<dbReference type="Proteomes" id="UP000001940">
    <property type="component" value="Chromosome III"/>
</dbReference>
<dbReference type="Bgee" id="WBGene00007925">
    <property type="expression patterns" value="Expressed in larva and 3 other cell types or tissues"/>
</dbReference>
<dbReference type="GO" id="GO:0005737">
    <property type="term" value="C:cytoplasm"/>
    <property type="evidence" value="ECO:0000318"/>
    <property type="project" value="GO_Central"/>
</dbReference>
<dbReference type="CDD" id="cd00170">
    <property type="entry name" value="SEC14"/>
    <property type="match status" value="1"/>
</dbReference>
<dbReference type="Gene3D" id="3.40.525.10">
    <property type="entry name" value="CRAL-TRIO lipid binding domain"/>
    <property type="match status" value="1"/>
</dbReference>
<dbReference type="Gene3D" id="2.60.120.680">
    <property type="entry name" value="GOLD domain"/>
    <property type="match status" value="1"/>
</dbReference>
<dbReference type="InterPro" id="IPR001251">
    <property type="entry name" value="CRAL-TRIO_dom"/>
</dbReference>
<dbReference type="InterPro" id="IPR036865">
    <property type="entry name" value="CRAL-TRIO_dom_sf"/>
</dbReference>
<dbReference type="InterPro" id="IPR009038">
    <property type="entry name" value="GOLD_dom"/>
</dbReference>
<dbReference type="InterPro" id="IPR051064">
    <property type="entry name" value="SEC14/CRAL-TRIO_domain"/>
</dbReference>
<dbReference type="PANTHER" id="PTHR23324:SF87">
    <property type="entry name" value="CRAL-TRIO DOMAIN-CONTAINING PROTEIN C34C12.6"/>
    <property type="match status" value="1"/>
</dbReference>
<dbReference type="PANTHER" id="PTHR23324">
    <property type="entry name" value="SEC14 RELATED PROTEIN"/>
    <property type="match status" value="1"/>
</dbReference>
<dbReference type="Pfam" id="PF00650">
    <property type="entry name" value="CRAL_TRIO"/>
    <property type="match status" value="1"/>
</dbReference>
<dbReference type="SMART" id="SM00516">
    <property type="entry name" value="SEC14"/>
    <property type="match status" value="1"/>
</dbReference>
<dbReference type="SUPFAM" id="SSF52087">
    <property type="entry name" value="CRAL/TRIO domain"/>
    <property type="match status" value="1"/>
</dbReference>
<dbReference type="PROSITE" id="PS50191">
    <property type="entry name" value="CRAL_TRIO"/>
    <property type="match status" value="1"/>
</dbReference>
<dbReference type="PROSITE" id="PS50866">
    <property type="entry name" value="GOLD"/>
    <property type="match status" value="1"/>
</dbReference>
<evidence type="ECO:0000255" key="1">
    <source>
        <dbReference type="PROSITE-ProRule" id="PRU00056"/>
    </source>
</evidence>
<evidence type="ECO:0000255" key="2">
    <source>
        <dbReference type="PROSITE-ProRule" id="PRU00096"/>
    </source>
</evidence>
<feature type="chain" id="PRO_0000210774" description="CRAL-TRIO domain-containing protein C34C12.6">
    <location>
        <begin position="1"/>
        <end position="400"/>
    </location>
</feature>
<feature type="domain" description="CRAL-TRIO" evidence="1">
    <location>
        <begin position="87"/>
        <end position="270"/>
    </location>
</feature>
<feature type="domain" description="GOLD" evidence="2">
    <location>
        <begin position="304"/>
        <end position="399"/>
    </location>
</feature>
<proteinExistence type="predicted"/>
<gene>
    <name type="ORF">C34C12.6</name>
</gene>
<protein>
    <recommendedName>
        <fullName>CRAL-TRIO domain-containing protein C34C12.6</fullName>
    </recommendedName>
</protein>
<keyword id="KW-1185">Reference proteome</keyword>
<accession>Q09270</accession>
<organism>
    <name type="scientific">Caenorhabditis elegans</name>
    <dbReference type="NCBI Taxonomy" id="6239"/>
    <lineage>
        <taxon>Eukaryota</taxon>
        <taxon>Metazoa</taxon>
        <taxon>Ecdysozoa</taxon>
        <taxon>Nematoda</taxon>
        <taxon>Chromadorea</taxon>
        <taxon>Rhabditida</taxon>
        <taxon>Rhabditina</taxon>
        <taxon>Rhabditomorpha</taxon>
        <taxon>Rhabditoidea</taxon>
        <taxon>Rhabditidae</taxon>
        <taxon>Peloderinae</taxon>
        <taxon>Caenorhabditis</taxon>
    </lineage>
</organism>
<sequence length="400" mass="46303">MGAKTEFRSSEPITDSERSQINSVRAMLQEKLPDGIPDDVNTDLNLCRWIRGYHGDTEKLVKNFATYLASRKAAGFVGNDFAEKFFELPSIAPFLQFIASSRLQDRQWSDEHNAFLFVERAWSQPKEFIKTFKTSDYLLHCFGYSEMLQQLILRREKKQSADKGPVQFIVIFDLNTVNITDYVNPMSGYMKLWQIRSELWQDWFPEMVQRIYLTNPPRLLGLLWKVARVFLSEENLKRIEIISDKSDLAGKFLPPWLVPKEYGGEFVNTVPPGDETGVSVRRKITSADYYKPYQHYKEHGIDRPKSSHKDVSPAEKFVFKIQVPNGKKLLWDFTASGELQFAIFRGNNRNDLVFPSLHLITNKLNEEGSLDNVSDSEISFEFQNLSGYFTLKLEYTVAII</sequence>